<comment type="similarity">
    <text evidence="1">Belongs to the FTR family.</text>
</comment>
<gene>
    <name type="primary">ehaS</name>
    <name type="ordered locus">MTBMA_c08020</name>
</gene>
<accession>Q9P9J4</accession>
<accession>D9PVZ9</accession>
<protein>
    <recommendedName>
        <fullName>Formylmethanofuran--tetrahydromethanopterin formyltransferase-like protein</fullName>
    </recommendedName>
</protein>
<reference key="1">
    <citation type="journal article" date="1999" name="Eur. J. Biochem.">
        <title>Methanobacterium thermoautotrophicum encodes two multisubunit membrane-bound [NiFe] hydrogenases. Transcription of the operons and sequence analysis of the deduced proteins.</title>
        <authorList>
            <person name="Tersteegen A."/>
            <person name="Hedderich R."/>
        </authorList>
    </citation>
    <scope>NUCLEOTIDE SEQUENCE [GENOMIC DNA]</scope>
    <source>
        <strain>ATCC BAA-927 / DSM 2133 / JCM 14651 / NBRC 100331 / OCM 82 / Marburg</strain>
    </source>
</reference>
<reference key="2">
    <citation type="journal article" date="2010" name="J. Bacteriol.">
        <title>Complete genome sequence of Methanothermobacter marburgensis, a methanoarchaeon model organism.</title>
        <authorList>
            <person name="Liesegang H."/>
            <person name="Kaster A.K."/>
            <person name="Wiezer A."/>
            <person name="Goenrich M."/>
            <person name="Wollherr A."/>
            <person name="Seedorf H."/>
            <person name="Gottschalk G."/>
            <person name="Thauer R.K."/>
        </authorList>
    </citation>
    <scope>NUCLEOTIDE SEQUENCE [LARGE SCALE GENOMIC DNA]</scope>
    <source>
        <strain>ATCC BAA-927 / DSM 2133 / JCM 14651 / NBRC 100331 / OCM 82 / Marburg</strain>
    </source>
</reference>
<dbReference type="EMBL" id="AJ243655">
    <property type="protein sequence ID" value="CAB52774.2"/>
    <property type="molecule type" value="Genomic_DNA"/>
</dbReference>
<dbReference type="EMBL" id="CP001710">
    <property type="protein sequence ID" value="ADL58397.1"/>
    <property type="molecule type" value="Genomic_DNA"/>
</dbReference>
<dbReference type="RefSeq" id="WP_013295621.1">
    <property type="nucleotide sequence ID" value="NC_014408.1"/>
</dbReference>
<dbReference type="SMR" id="Q9P9J4"/>
<dbReference type="STRING" id="79929.MTBMA_c08020"/>
<dbReference type="PaxDb" id="79929-MTBMA_c08020"/>
<dbReference type="GeneID" id="77399581"/>
<dbReference type="GeneID" id="9704510"/>
<dbReference type="KEGG" id="mmg:MTBMA_c08020"/>
<dbReference type="PATRIC" id="fig|79929.8.peg.785"/>
<dbReference type="HOGENOM" id="CLU_081314_0_0_2"/>
<dbReference type="OrthoDB" id="73512at2157"/>
<dbReference type="Proteomes" id="UP000000345">
    <property type="component" value="Chromosome"/>
</dbReference>
<dbReference type="GO" id="GO:0030270">
    <property type="term" value="F:formylmethanofuran-tetrahydromethanopterin N-formyltransferase activity"/>
    <property type="evidence" value="ECO:0007669"/>
    <property type="project" value="InterPro"/>
</dbReference>
<dbReference type="GO" id="GO:0006730">
    <property type="term" value="P:one-carbon metabolic process"/>
    <property type="evidence" value="ECO:0007669"/>
    <property type="project" value="InterPro"/>
</dbReference>
<dbReference type="Gene3D" id="3.30.70.520">
    <property type="match status" value="2"/>
</dbReference>
<dbReference type="InterPro" id="IPR014053">
    <property type="entry name" value="ForMFR_H4MPT_ForTrfase"/>
</dbReference>
<dbReference type="InterPro" id="IPR002770">
    <property type="entry name" value="ForMFR_H4MPT_ForTrfase_C"/>
</dbReference>
<dbReference type="InterPro" id="IPR023447">
    <property type="entry name" value="ForMFR_H4MPT_ForTrfase_fd-like"/>
</dbReference>
<dbReference type="InterPro" id="IPR022667">
    <property type="entry name" value="ForMFR_H4MPT_ForTrfase_N"/>
</dbReference>
<dbReference type="NCBIfam" id="NF002554">
    <property type="entry name" value="PRK02114.1"/>
    <property type="match status" value="1"/>
</dbReference>
<dbReference type="Pfam" id="PF01913">
    <property type="entry name" value="FTR"/>
    <property type="match status" value="1"/>
</dbReference>
<dbReference type="Pfam" id="PF02741">
    <property type="entry name" value="FTR_C"/>
    <property type="match status" value="1"/>
</dbReference>
<dbReference type="PIRSF" id="PIRSF006414">
    <property type="entry name" value="Ftr_formyl_trnsf"/>
    <property type="match status" value="1"/>
</dbReference>
<dbReference type="SUPFAM" id="SSF55112">
    <property type="entry name" value="Formylmethanofuran:tetrahydromethanopterin formyltransferase"/>
    <property type="match status" value="2"/>
</dbReference>
<keyword id="KW-0808">Transferase</keyword>
<feature type="chain" id="PRO_0000138129" description="Formylmethanofuran--tetrahydromethanopterin formyltransferase-like protein">
    <location>
        <begin position="1"/>
        <end position="296"/>
    </location>
</feature>
<evidence type="ECO:0000305" key="1"/>
<sequence length="296" mass="32582">MEINGTVIEDTFSEAFTGRCVRATITARDMETVRRAAYDSTATPGAVIGRVEGGVESFHSADETPDGRPGATVQFYYALPDLEKFQVELSYRIRQDILVKPFTALYNSTPDPEGYMDMMKHVGHCGDGYEWIEEFGGREMINIPIAVPDFKIESKMGYRDAIMGANFWYMCRDPETVLEAGRAAINAIGEVEGVVTPFDICSAASKPETNYPWIGPTTNHPYCPSLRDLLGDKSKVPEGVGYIPEIVINGLSLEALEEAMRAGIETVCRYDGVLMVSAGNYDGKLGDHRIDLHGVL</sequence>
<organism>
    <name type="scientific">Methanothermobacter marburgensis (strain ATCC BAA-927 / DSM 2133 / JCM 14651 / NBRC 100331 / OCM 82 / Marburg)</name>
    <name type="common">Methanobacterium thermoautotrophicum</name>
    <dbReference type="NCBI Taxonomy" id="79929"/>
    <lineage>
        <taxon>Archaea</taxon>
        <taxon>Methanobacteriati</taxon>
        <taxon>Methanobacteriota</taxon>
        <taxon>Methanomada group</taxon>
        <taxon>Methanobacteria</taxon>
        <taxon>Methanobacteriales</taxon>
        <taxon>Methanobacteriaceae</taxon>
        <taxon>Methanothermobacter</taxon>
    </lineage>
</organism>
<proteinExistence type="inferred from homology"/>
<name>FTRL_METTM</name>